<keyword id="KW-0044">Antibiotic</keyword>
<keyword id="KW-0929">Antimicrobial</keyword>
<keyword id="KW-0211">Defensin</keyword>
<keyword id="KW-0903">Direct protein sequencing</keyword>
<keyword id="KW-1015">Disulfide bond</keyword>
<keyword id="KW-0964">Secreted</keyword>
<comment type="function">
    <text evidence="3 4">Has antibacterial activity against the Gram-positive bacteria S.aureus 1056 MRSA (MIC=1.25 ug/ml) and S.aureus NCTC 4163 (MIC=6.7 ug/ml), and the Gram-negative bacteria E.coli O157:H7 (MIC=0.96 ug/ml) and E.coli 0111 (MIC=6.7 ug/ml). Does not have antifungal activity against the yeast C.albicans 3153A.</text>
</comment>
<comment type="subcellular location">
    <subcellularLocation>
        <location>Secreted</location>
    </subcellularLocation>
</comment>
<comment type="mass spectrometry" mass="4011.55" method="Electrospray" evidence="4"/>
<comment type="mass spectrometry" mass="4009.8" method="MALDI" evidence="3"/>
<comment type="similarity">
    <text evidence="2">Belongs to the beta-defensin family.</text>
</comment>
<proteinExistence type="evidence at protein level"/>
<dbReference type="SMR" id="P85113"/>
<dbReference type="GO" id="GO:0005576">
    <property type="term" value="C:extracellular region"/>
    <property type="evidence" value="ECO:0007669"/>
    <property type="project" value="UniProtKB-SubCell"/>
</dbReference>
<dbReference type="GO" id="GO:0042742">
    <property type="term" value="P:defense response to bacterium"/>
    <property type="evidence" value="ECO:0007669"/>
    <property type="project" value="UniProtKB-KW"/>
</dbReference>
<dbReference type="InterPro" id="IPR001855">
    <property type="entry name" value="Defensin_beta-like"/>
</dbReference>
<dbReference type="Pfam" id="PF00711">
    <property type="entry name" value="Defensin_beta"/>
    <property type="match status" value="1"/>
</dbReference>
<dbReference type="SUPFAM" id="SSF57392">
    <property type="entry name" value="Defensin-like"/>
    <property type="match status" value="1"/>
</dbReference>
<evidence type="ECO:0000250" key="1">
    <source>
        <dbReference type="UniProtKB" id="P46171"/>
    </source>
</evidence>
<evidence type="ECO:0000255" key="2"/>
<evidence type="ECO:0000269" key="3">
    <source>
    </source>
</evidence>
<evidence type="ECO:0000269" key="4">
    <source ref="1"/>
</evidence>
<evidence type="ECO:0000305" key="5"/>
<reference evidence="5" key="1">
    <citation type="journal article" date="2001" name="Biotechnol. Lett.">
        <title>Purification and characterization of the antimicrobial peptide, ostricacin.</title>
        <authorList>
            <person name="Yu P.-L."/>
            <person name="Choudhury S.D."/>
            <person name="Ahrens K."/>
        </authorList>
    </citation>
    <scope>PROTEIN SEQUENCE</scope>
    <scope>FUNCTION</scope>
    <scope>MASS SPECTROMETRY</scope>
    <source>
        <tissue evidence="4">Blood</tissue>
    </source>
</reference>
<reference evidence="5" key="2">
    <citation type="journal article" date="2006" name="Int. J. Antimicrob. Agents">
        <title>Identification of three novel ostricacins: an update on the phylogenetic perspective of beta-defensins.</title>
        <authorList>
            <person name="Sugiarto H."/>
            <person name="Yu P.-L."/>
        </authorList>
    </citation>
    <scope>PROTEIN SEQUENCE OF 1-35</scope>
    <scope>FUNCTION</scope>
    <scope>MASS SPECTROMETRY</scope>
    <source>
        <tissue evidence="3">Blood</tissue>
    </source>
</reference>
<name>OSTR1_STRCA</name>
<organism>
    <name type="scientific">Struthio camelus</name>
    <name type="common">Common ostrich</name>
    <dbReference type="NCBI Taxonomy" id="8801"/>
    <lineage>
        <taxon>Eukaryota</taxon>
        <taxon>Metazoa</taxon>
        <taxon>Chordata</taxon>
        <taxon>Craniata</taxon>
        <taxon>Vertebrata</taxon>
        <taxon>Euteleostomi</taxon>
        <taxon>Archelosauria</taxon>
        <taxon>Archosauria</taxon>
        <taxon>Dinosauria</taxon>
        <taxon>Saurischia</taxon>
        <taxon>Theropoda</taxon>
        <taxon>Coelurosauria</taxon>
        <taxon>Aves</taxon>
        <taxon>Palaeognathae</taxon>
        <taxon>Struthioniformes</taxon>
        <taxon>Struthionidae</taxon>
        <taxon>Struthio</taxon>
    </lineage>
</organism>
<sequence length="36" mass="4018">LFCRKGTCHFGGCPAHLVKVGSCFGFRACCKWPWDV</sequence>
<feature type="peptide" id="PRO_0000284750" description="Ostricacin-1" evidence="4">
    <location>
        <begin position="1"/>
        <end position="36"/>
    </location>
</feature>
<feature type="disulfide bond" evidence="1">
    <location>
        <begin position="3"/>
        <end position="29"/>
    </location>
</feature>
<feature type="disulfide bond" evidence="1">
    <location>
        <begin position="8"/>
        <end position="23"/>
    </location>
</feature>
<feature type="disulfide bond" evidence="1">
    <location>
        <begin position="13"/>
        <end position="30"/>
    </location>
</feature>
<protein>
    <recommendedName>
        <fullName>Ostricacin-1</fullName>
    </recommendedName>
    <alternativeName>
        <fullName>Beta-defensin 2</fullName>
    </alternativeName>
</protein>
<accession>P85113</accession>